<reference key="1">
    <citation type="journal article" date="2008" name="J. Bacteriol.">
        <title>The pangenome structure of Escherichia coli: comparative genomic analysis of E. coli commensal and pathogenic isolates.</title>
        <authorList>
            <person name="Rasko D.A."/>
            <person name="Rosovitz M.J."/>
            <person name="Myers G.S.A."/>
            <person name="Mongodin E.F."/>
            <person name="Fricke W.F."/>
            <person name="Gajer P."/>
            <person name="Crabtree J."/>
            <person name="Sebaihia M."/>
            <person name="Thomson N.R."/>
            <person name="Chaudhuri R."/>
            <person name="Henderson I.R."/>
            <person name="Sperandio V."/>
            <person name="Ravel J."/>
        </authorList>
    </citation>
    <scope>NUCLEOTIDE SEQUENCE [LARGE SCALE GENOMIC DNA]</scope>
    <source>
        <strain>HS</strain>
    </source>
</reference>
<name>FIS_ECOHS</name>
<sequence>MFEQRVNSDVLTVSTVNSQDQVTQKPLRDSVKQALKNYFAQLNGQDVNDLYELVLAEVEQPLLDMVMQYTRGNQTRAALMMGINRGTLRKKLKKYGMN</sequence>
<accession>A8A573</accession>
<comment type="function">
    <text evidence="1">Activates ribosomal RNA transcription. Plays a direct role in upstream activation of rRNA promoters.</text>
</comment>
<comment type="subunit">
    <text evidence="1">Homodimer.</text>
</comment>
<comment type="similarity">
    <text evidence="1">Belongs to the transcriptional regulatory Fis family.</text>
</comment>
<dbReference type="EMBL" id="CP000802">
    <property type="protein sequence ID" value="ABV07677.1"/>
    <property type="molecule type" value="Genomic_DNA"/>
</dbReference>
<dbReference type="RefSeq" id="WP_000462905.1">
    <property type="nucleotide sequence ID" value="NC_009800.1"/>
</dbReference>
<dbReference type="SMR" id="A8A573"/>
<dbReference type="GeneID" id="98390389"/>
<dbReference type="KEGG" id="ecx:EcHS_A3454"/>
<dbReference type="HOGENOM" id="CLU_158040_3_0_6"/>
<dbReference type="GO" id="GO:0003700">
    <property type="term" value="F:DNA-binding transcription factor activity"/>
    <property type="evidence" value="ECO:0007669"/>
    <property type="project" value="UniProtKB-UniRule"/>
</dbReference>
<dbReference type="GO" id="GO:0043565">
    <property type="term" value="F:sequence-specific DNA binding"/>
    <property type="evidence" value="ECO:0007669"/>
    <property type="project" value="InterPro"/>
</dbReference>
<dbReference type="FunFam" id="1.10.10.60:FF:000006">
    <property type="entry name" value="DNA-binding protein Fis"/>
    <property type="match status" value="1"/>
</dbReference>
<dbReference type="Gene3D" id="1.10.10.60">
    <property type="entry name" value="Homeodomain-like"/>
    <property type="match status" value="1"/>
</dbReference>
<dbReference type="HAMAP" id="MF_00166">
    <property type="entry name" value="DNA_binding_Fis"/>
    <property type="match status" value="1"/>
</dbReference>
<dbReference type="InterPro" id="IPR005412">
    <property type="entry name" value="Fis_DNA-bd"/>
</dbReference>
<dbReference type="InterPro" id="IPR009057">
    <property type="entry name" value="Homeodomain-like_sf"/>
</dbReference>
<dbReference type="InterPro" id="IPR002197">
    <property type="entry name" value="HTH_Fis"/>
</dbReference>
<dbReference type="InterPro" id="IPR050207">
    <property type="entry name" value="Trans_regulatory_Fis"/>
</dbReference>
<dbReference type="NCBIfam" id="NF001659">
    <property type="entry name" value="PRK00430.1"/>
    <property type="match status" value="1"/>
</dbReference>
<dbReference type="PANTHER" id="PTHR47918">
    <property type="entry name" value="DNA-BINDING PROTEIN FIS"/>
    <property type="match status" value="1"/>
</dbReference>
<dbReference type="PANTHER" id="PTHR47918:SF1">
    <property type="entry name" value="DNA-BINDING PROTEIN FIS"/>
    <property type="match status" value="1"/>
</dbReference>
<dbReference type="Pfam" id="PF02954">
    <property type="entry name" value="HTH_8"/>
    <property type="match status" value="1"/>
</dbReference>
<dbReference type="PIRSF" id="PIRSF002097">
    <property type="entry name" value="DNA-binding_Fis"/>
    <property type="match status" value="1"/>
</dbReference>
<dbReference type="PRINTS" id="PR01591">
    <property type="entry name" value="DNABINDNGFIS"/>
</dbReference>
<dbReference type="PRINTS" id="PR01590">
    <property type="entry name" value="HTHFIS"/>
</dbReference>
<dbReference type="SUPFAM" id="SSF46689">
    <property type="entry name" value="Homeodomain-like"/>
    <property type="match status" value="1"/>
</dbReference>
<organism>
    <name type="scientific">Escherichia coli O9:H4 (strain HS)</name>
    <dbReference type="NCBI Taxonomy" id="331112"/>
    <lineage>
        <taxon>Bacteria</taxon>
        <taxon>Pseudomonadati</taxon>
        <taxon>Pseudomonadota</taxon>
        <taxon>Gammaproteobacteria</taxon>
        <taxon>Enterobacterales</taxon>
        <taxon>Enterobacteriaceae</taxon>
        <taxon>Escherichia</taxon>
    </lineage>
</organism>
<keyword id="KW-0010">Activator</keyword>
<keyword id="KW-0238">DNA-binding</keyword>
<keyword id="KW-0804">Transcription</keyword>
<keyword id="KW-0805">Transcription regulation</keyword>
<feature type="chain" id="PRO_1000058261" description="DNA-binding protein Fis">
    <location>
        <begin position="1"/>
        <end position="98"/>
    </location>
</feature>
<feature type="DNA-binding region" description="H-T-H motif" evidence="1">
    <location>
        <begin position="74"/>
        <end position="93"/>
    </location>
</feature>
<evidence type="ECO:0000255" key="1">
    <source>
        <dbReference type="HAMAP-Rule" id="MF_00166"/>
    </source>
</evidence>
<protein>
    <recommendedName>
        <fullName evidence="1">DNA-binding protein Fis</fullName>
    </recommendedName>
</protein>
<gene>
    <name evidence="1" type="primary">fis</name>
    <name type="ordered locus">EcHS_A3454</name>
</gene>
<proteinExistence type="inferred from homology"/>